<accession>A8AIJ8</accession>
<keyword id="KW-0012">Acyltransferase</keyword>
<keyword id="KW-0963">Cytoplasm</keyword>
<keyword id="KW-1185">Reference proteome</keyword>
<keyword id="KW-0808">Transferase</keyword>
<name>LFTR_CITK8</name>
<evidence type="ECO:0000255" key="1">
    <source>
        <dbReference type="HAMAP-Rule" id="MF_00688"/>
    </source>
</evidence>
<comment type="function">
    <text evidence="1">Functions in the N-end rule pathway of protein degradation where it conjugates Leu, Phe and, less efficiently, Met from aminoacyl-tRNAs to the N-termini of proteins containing an N-terminal arginine or lysine.</text>
</comment>
<comment type="catalytic activity">
    <reaction evidence="1">
        <text>N-terminal L-lysyl-[protein] + L-leucyl-tRNA(Leu) = N-terminal L-leucyl-L-lysyl-[protein] + tRNA(Leu) + H(+)</text>
        <dbReference type="Rhea" id="RHEA:12340"/>
        <dbReference type="Rhea" id="RHEA-COMP:9613"/>
        <dbReference type="Rhea" id="RHEA-COMP:9622"/>
        <dbReference type="Rhea" id="RHEA-COMP:12670"/>
        <dbReference type="Rhea" id="RHEA-COMP:12671"/>
        <dbReference type="ChEBI" id="CHEBI:15378"/>
        <dbReference type="ChEBI" id="CHEBI:65249"/>
        <dbReference type="ChEBI" id="CHEBI:78442"/>
        <dbReference type="ChEBI" id="CHEBI:78494"/>
        <dbReference type="ChEBI" id="CHEBI:133043"/>
        <dbReference type="EC" id="2.3.2.6"/>
    </reaction>
</comment>
<comment type="catalytic activity">
    <reaction evidence="1">
        <text>N-terminal L-arginyl-[protein] + L-leucyl-tRNA(Leu) = N-terminal L-leucyl-L-arginyl-[protein] + tRNA(Leu) + H(+)</text>
        <dbReference type="Rhea" id="RHEA:50416"/>
        <dbReference type="Rhea" id="RHEA-COMP:9613"/>
        <dbReference type="Rhea" id="RHEA-COMP:9622"/>
        <dbReference type="Rhea" id="RHEA-COMP:12672"/>
        <dbReference type="Rhea" id="RHEA-COMP:12673"/>
        <dbReference type="ChEBI" id="CHEBI:15378"/>
        <dbReference type="ChEBI" id="CHEBI:64719"/>
        <dbReference type="ChEBI" id="CHEBI:78442"/>
        <dbReference type="ChEBI" id="CHEBI:78494"/>
        <dbReference type="ChEBI" id="CHEBI:133044"/>
        <dbReference type="EC" id="2.3.2.6"/>
    </reaction>
</comment>
<comment type="catalytic activity">
    <reaction evidence="1">
        <text>L-phenylalanyl-tRNA(Phe) + an N-terminal L-alpha-aminoacyl-[protein] = an N-terminal L-phenylalanyl-L-alpha-aminoacyl-[protein] + tRNA(Phe)</text>
        <dbReference type="Rhea" id="RHEA:43632"/>
        <dbReference type="Rhea" id="RHEA-COMP:9668"/>
        <dbReference type="Rhea" id="RHEA-COMP:9699"/>
        <dbReference type="Rhea" id="RHEA-COMP:10636"/>
        <dbReference type="Rhea" id="RHEA-COMP:10637"/>
        <dbReference type="ChEBI" id="CHEBI:78442"/>
        <dbReference type="ChEBI" id="CHEBI:78531"/>
        <dbReference type="ChEBI" id="CHEBI:78597"/>
        <dbReference type="ChEBI" id="CHEBI:83561"/>
        <dbReference type="EC" id="2.3.2.6"/>
    </reaction>
</comment>
<comment type="subcellular location">
    <subcellularLocation>
        <location evidence="1">Cytoplasm</location>
    </subcellularLocation>
</comment>
<comment type="similarity">
    <text evidence="1">Belongs to the L/F-transferase family.</text>
</comment>
<gene>
    <name evidence="1" type="primary">aat</name>
    <name type="ordered locus">CKO_02187</name>
</gene>
<dbReference type="EC" id="2.3.2.6" evidence="1"/>
<dbReference type="EMBL" id="CP000822">
    <property type="protein sequence ID" value="ABV13311.1"/>
    <property type="molecule type" value="Genomic_DNA"/>
</dbReference>
<dbReference type="RefSeq" id="WP_012133041.1">
    <property type="nucleotide sequence ID" value="NC_009792.1"/>
</dbReference>
<dbReference type="SMR" id="A8AIJ8"/>
<dbReference type="STRING" id="290338.CKO_02187"/>
<dbReference type="GeneID" id="45136119"/>
<dbReference type="KEGG" id="cko:CKO_02187"/>
<dbReference type="HOGENOM" id="CLU_075045_0_0_6"/>
<dbReference type="OrthoDB" id="9790282at2"/>
<dbReference type="Proteomes" id="UP000008148">
    <property type="component" value="Chromosome"/>
</dbReference>
<dbReference type="GO" id="GO:0005737">
    <property type="term" value="C:cytoplasm"/>
    <property type="evidence" value="ECO:0007669"/>
    <property type="project" value="UniProtKB-SubCell"/>
</dbReference>
<dbReference type="GO" id="GO:0008914">
    <property type="term" value="F:leucyl-tRNA--protein transferase activity"/>
    <property type="evidence" value="ECO:0007669"/>
    <property type="project" value="UniProtKB-UniRule"/>
</dbReference>
<dbReference type="GO" id="GO:0030163">
    <property type="term" value="P:protein catabolic process"/>
    <property type="evidence" value="ECO:0007669"/>
    <property type="project" value="UniProtKB-UniRule"/>
</dbReference>
<dbReference type="FunFam" id="3.30.70.3550:FF:000001">
    <property type="entry name" value="Leucyl/phenylalanyl-tRNA--protein transferase"/>
    <property type="match status" value="1"/>
</dbReference>
<dbReference type="FunFam" id="3.40.630.70:FF:000001">
    <property type="entry name" value="Leucyl/phenylalanyl-tRNA--protein transferase"/>
    <property type="match status" value="1"/>
</dbReference>
<dbReference type="Gene3D" id="3.40.630.70">
    <property type="entry name" value="Leucyl/phenylalanyl-tRNA-protein transferase, C-terminal domain"/>
    <property type="match status" value="1"/>
</dbReference>
<dbReference type="Gene3D" id="3.30.70.3550">
    <property type="entry name" value="Leucyl/phenylalanyl-tRNA-protein transferase, N-terminal domain"/>
    <property type="match status" value="1"/>
</dbReference>
<dbReference type="HAMAP" id="MF_00688">
    <property type="entry name" value="Leu_Phe_trans"/>
    <property type="match status" value="1"/>
</dbReference>
<dbReference type="InterPro" id="IPR016181">
    <property type="entry name" value="Acyl_CoA_acyltransferase"/>
</dbReference>
<dbReference type="InterPro" id="IPR004616">
    <property type="entry name" value="Leu/Phe-tRNA_Trfase"/>
</dbReference>
<dbReference type="InterPro" id="IPR042203">
    <property type="entry name" value="Leu/Phe-tRNA_Trfase_C"/>
</dbReference>
<dbReference type="InterPro" id="IPR042221">
    <property type="entry name" value="Leu/Phe-tRNA_Trfase_N"/>
</dbReference>
<dbReference type="NCBIfam" id="TIGR00667">
    <property type="entry name" value="aat"/>
    <property type="match status" value="1"/>
</dbReference>
<dbReference type="PANTHER" id="PTHR30098">
    <property type="entry name" value="LEUCYL/PHENYLALANYL-TRNA--PROTEIN TRANSFERASE"/>
    <property type="match status" value="1"/>
</dbReference>
<dbReference type="PANTHER" id="PTHR30098:SF2">
    <property type="entry name" value="LEUCYL_PHENYLALANYL-TRNA--PROTEIN TRANSFERASE"/>
    <property type="match status" value="1"/>
</dbReference>
<dbReference type="Pfam" id="PF03588">
    <property type="entry name" value="Leu_Phe_trans"/>
    <property type="match status" value="1"/>
</dbReference>
<dbReference type="SUPFAM" id="SSF55729">
    <property type="entry name" value="Acyl-CoA N-acyltransferases (Nat)"/>
    <property type="match status" value="1"/>
</dbReference>
<protein>
    <recommendedName>
        <fullName evidence="1">Leucyl/phenylalanyl-tRNA--protein transferase</fullName>
        <ecNumber evidence="1">2.3.2.6</ecNumber>
    </recommendedName>
    <alternativeName>
        <fullName evidence="1">L/F-transferase</fullName>
    </alternativeName>
    <alternativeName>
        <fullName evidence="1">Leucyltransferase</fullName>
    </alternativeName>
    <alternativeName>
        <fullName evidence="1">Phenyalanyltransferase</fullName>
    </alternativeName>
</protein>
<feature type="chain" id="PRO_1000045104" description="Leucyl/phenylalanyl-tRNA--protein transferase">
    <location>
        <begin position="1"/>
        <end position="234"/>
    </location>
</feature>
<organism>
    <name type="scientific">Citrobacter koseri (strain ATCC BAA-895 / CDC 4225-83 / SGSC4696)</name>
    <dbReference type="NCBI Taxonomy" id="290338"/>
    <lineage>
        <taxon>Bacteria</taxon>
        <taxon>Pseudomonadati</taxon>
        <taxon>Pseudomonadota</taxon>
        <taxon>Gammaproteobacteria</taxon>
        <taxon>Enterobacterales</taxon>
        <taxon>Enterobacteriaceae</taxon>
        <taxon>Citrobacter</taxon>
    </lineage>
</organism>
<reference key="1">
    <citation type="submission" date="2007-08" db="EMBL/GenBank/DDBJ databases">
        <authorList>
            <consortium name="The Citrobacter koseri Genome Sequencing Project"/>
            <person name="McClelland M."/>
            <person name="Sanderson E.K."/>
            <person name="Porwollik S."/>
            <person name="Spieth J."/>
            <person name="Clifton W.S."/>
            <person name="Latreille P."/>
            <person name="Courtney L."/>
            <person name="Wang C."/>
            <person name="Pepin K."/>
            <person name="Bhonagiri V."/>
            <person name="Nash W."/>
            <person name="Johnson M."/>
            <person name="Thiruvilangam P."/>
            <person name="Wilson R."/>
        </authorList>
    </citation>
    <scope>NUCLEOTIDE SEQUENCE [LARGE SCALE GENOMIC DNA]</scope>
    <source>
        <strain>ATCC BAA-895 / CDC 4225-83 / SGSC4696</strain>
    </source>
</reference>
<proteinExistence type="inferred from homology"/>
<sequence length="234" mass="26481">MRLVQLSRHSIAFPSPEGALREPNGLLALGGDLSPARLLMAYQRGIFPWFSPGDPILWWSPDPRAILQPETLHISRSMKRFHKRSPYRVTLNYAFGQVIEGCANDRDEGTWITRDVVEAYHRLHELGHAHSIEVWRHNALVGGMYGVSQGTLFCGESMFSRQENASKTALLVFCAEFIRQGGKLIDCQVLNSHTASLGAVEIPRRQYLEHLGSLRQQRLPGHFWVPRTLFSPQA</sequence>